<dbReference type="EMBL" id="L42945">
    <property type="protein sequence ID" value="AAB48183.1"/>
    <property type="molecule type" value="Genomic_DNA"/>
</dbReference>
<dbReference type="EMBL" id="CP000253">
    <property type="protein sequence ID" value="ABD29406.1"/>
    <property type="molecule type" value="Genomic_DNA"/>
</dbReference>
<dbReference type="RefSeq" id="WP_000645452.1">
    <property type="nucleotide sequence ID" value="NZ_LS483365.1"/>
</dbReference>
<dbReference type="RefSeq" id="YP_498826.1">
    <property type="nucleotide sequence ID" value="NC_007795.1"/>
</dbReference>
<dbReference type="PDB" id="6M8O">
    <property type="method" value="X-ray"/>
    <property type="resolution" value="2.50 A"/>
    <property type="chains" value="A=1-134"/>
</dbReference>
<dbReference type="PDBsum" id="6M8O"/>
<dbReference type="SMR" id="P60611"/>
<dbReference type="STRING" id="93061.SAOUHSC_00231"/>
<dbReference type="PaxDb" id="1280-SAXN108_0241"/>
<dbReference type="DNASU" id="3920306"/>
<dbReference type="GeneID" id="3920306"/>
<dbReference type="KEGG" id="sao:SAOUHSC_00231"/>
<dbReference type="PATRIC" id="fig|93061.5.peg.212"/>
<dbReference type="eggNOG" id="COG3279">
    <property type="taxonomic scope" value="Bacteria"/>
</dbReference>
<dbReference type="HOGENOM" id="CLU_000445_14_1_9"/>
<dbReference type="OrthoDB" id="9809318at2"/>
<dbReference type="PRO" id="PR:P60611"/>
<dbReference type="Proteomes" id="UP000008816">
    <property type="component" value="Chromosome"/>
</dbReference>
<dbReference type="GO" id="GO:0005829">
    <property type="term" value="C:cytosol"/>
    <property type="evidence" value="ECO:0000318"/>
    <property type="project" value="GO_Central"/>
</dbReference>
<dbReference type="GO" id="GO:0032993">
    <property type="term" value="C:protein-DNA complex"/>
    <property type="evidence" value="ECO:0000318"/>
    <property type="project" value="GO_Central"/>
</dbReference>
<dbReference type="GO" id="GO:0000156">
    <property type="term" value="F:phosphorelay response regulator activity"/>
    <property type="evidence" value="ECO:0000318"/>
    <property type="project" value="GO_Central"/>
</dbReference>
<dbReference type="GO" id="GO:0000976">
    <property type="term" value="F:transcription cis-regulatory region binding"/>
    <property type="evidence" value="ECO:0000318"/>
    <property type="project" value="GO_Central"/>
</dbReference>
<dbReference type="GO" id="GO:0006355">
    <property type="term" value="P:regulation of DNA-templated transcription"/>
    <property type="evidence" value="ECO:0000318"/>
    <property type="project" value="GO_Central"/>
</dbReference>
<dbReference type="CDD" id="cd17532">
    <property type="entry name" value="REC_LytTR_AlgR-like"/>
    <property type="match status" value="1"/>
</dbReference>
<dbReference type="FunFam" id="3.40.50.2300:FF:000134">
    <property type="entry name" value="Autolysin response regulator LytR"/>
    <property type="match status" value="1"/>
</dbReference>
<dbReference type="Gene3D" id="3.40.50.2300">
    <property type="match status" value="1"/>
</dbReference>
<dbReference type="Gene3D" id="2.40.50.1020">
    <property type="entry name" value="LytTr DNA-binding domain"/>
    <property type="match status" value="1"/>
</dbReference>
<dbReference type="InterPro" id="IPR011006">
    <property type="entry name" value="CheY-like_superfamily"/>
</dbReference>
<dbReference type="InterPro" id="IPR046947">
    <property type="entry name" value="LytR-like"/>
</dbReference>
<dbReference type="InterPro" id="IPR007492">
    <property type="entry name" value="LytTR_DNA-bd_dom"/>
</dbReference>
<dbReference type="InterPro" id="IPR001789">
    <property type="entry name" value="Sig_transdc_resp-reg_receiver"/>
</dbReference>
<dbReference type="NCBIfam" id="NF010684">
    <property type="entry name" value="PRK14084.1"/>
    <property type="match status" value="1"/>
</dbReference>
<dbReference type="PANTHER" id="PTHR37299:SF1">
    <property type="entry name" value="STAGE 0 SPORULATION PROTEIN A HOMOLOG"/>
    <property type="match status" value="1"/>
</dbReference>
<dbReference type="PANTHER" id="PTHR37299">
    <property type="entry name" value="TRANSCRIPTIONAL REGULATOR-RELATED"/>
    <property type="match status" value="1"/>
</dbReference>
<dbReference type="Pfam" id="PF04397">
    <property type="entry name" value="LytTR"/>
    <property type="match status" value="1"/>
</dbReference>
<dbReference type="Pfam" id="PF00072">
    <property type="entry name" value="Response_reg"/>
    <property type="match status" value="1"/>
</dbReference>
<dbReference type="SMART" id="SM00850">
    <property type="entry name" value="LytTR"/>
    <property type="match status" value="1"/>
</dbReference>
<dbReference type="SMART" id="SM00448">
    <property type="entry name" value="REC"/>
    <property type="match status" value="1"/>
</dbReference>
<dbReference type="SUPFAM" id="SSF52172">
    <property type="entry name" value="CheY-like"/>
    <property type="match status" value="1"/>
</dbReference>
<dbReference type="PROSITE" id="PS50930">
    <property type="entry name" value="HTH_LYTTR"/>
    <property type="match status" value="1"/>
</dbReference>
<dbReference type="PROSITE" id="PS50110">
    <property type="entry name" value="RESPONSE_REGULATORY"/>
    <property type="match status" value="1"/>
</dbReference>
<comment type="function">
    <text evidence="4 5 6 7">Member of the two-component regulatory system LytR/LytS that regulates genes involved in autolysis, programmed cell death, biofilm formation and cell wall metabolism (PubMed:19502411). Also participates in sensing and responding to host defense cationic antimicrobial peptides (HDPs) (PubMed:23733465). Upon phosphorylation by LytS, functions as a transcription regulator by direct binding to promoter regions of target genes including lrgA and lrgB, to positively regulate their expression (PubMed:25491472, PubMed:8824633).</text>
</comment>
<comment type="subunit">
    <text evidence="1">Homodimer; when phosphorylated.</text>
</comment>
<comment type="subcellular location">
    <subcellularLocation>
        <location>Cytoplasm</location>
    </subcellularLocation>
</comment>
<comment type="PTM">
    <text evidence="6">Phosphorylated and dephosphorylated by LytS.</text>
</comment>
<comment type="disruption phenotype">
    <text evidence="5">Deletion significantly reduces target tissue survival during calcium-daptomycin treatment and increases susceptibility to host defense cationic antimicrobial peptides.</text>
</comment>
<sequence length="246" mass="28221">MKALIIDDEPLARNELTYLLNEIGGFEEINEAENVKETLEALLINQYDIIFLDVNLMDENGIELGAKIQKMKEPPAIIFATAHDQYAVQAFELNATDYILKPFGQKRIEQAVNKVRATKAKDDNNASAIANDMSANFDQSLPVEIDDKIHMLKQQNIIGIGTHNGITTIHTTNHKYETTEPLNRYEKRLNPTYFIRIHRSYIINTKHIKEVQQWFNYTYMVILTNGVKMQVGRSFMKDFKASIGLL</sequence>
<organism>
    <name type="scientific">Staphylococcus aureus (strain NCTC 8325 / PS 47)</name>
    <dbReference type="NCBI Taxonomy" id="93061"/>
    <lineage>
        <taxon>Bacteria</taxon>
        <taxon>Bacillati</taxon>
        <taxon>Bacillota</taxon>
        <taxon>Bacilli</taxon>
        <taxon>Bacillales</taxon>
        <taxon>Staphylococcaceae</taxon>
        <taxon>Staphylococcus</taxon>
    </lineage>
</organism>
<evidence type="ECO:0000250" key="1">
    <source>
        <dbReference type="UniProtKB" id="P60609"/>
    </source>
</evidence>
<evidence type="ECO:0000255" key="2">
    <source>
        <dbReference type="PROSITE-ProRule" id="PRU00112"/>
    </source>
</evidence>
<evidence type="ECO:0000255" key="3">
    <source>
        <dbReference type="PROSITE-ProRule" id="PRU00169"/>
    </source>
</evidence>
<evidence type="ECO:0000269" key="4">
    <source>
    </source>
</evidence>
<evidence type="ECO:0000269" key="5">
    <source>
    </source>
</evidence>
<evidence type="ECO:0000269" key="6">
    <source>
    </source>
</evidence>
<evidence type="ECO:0000269" key="7">
    <source>
    </source>
</evidence>
<evidence type="ECO:0007829" key="8">
    <source>
        <dbReference type="PDB" id="6M8O"/>
    </source>
</evidence>
<feature type="chain" id="PRO_0000081131" description="Transcriptional regulatory protein LytR">
    <location>
        <begin position="1"/>
        <end position="246"/>
    </location>
</feature>
<feature type="domain" description="Response regulatory" evidence="3">
    <location>
        <begin position="2"/>
        <end position="116"/>
    </location>
</feature>
<feature type="domain" description="HTH LytTR-type" evidence="2">
    <location>
        <begin position="141"/>
        <end position="245"/>
    </location>
</feature>
<feature type="modified residue" description="4-aspartylphosphate" evidence="3">
    <location>
        <position position="53"/>
    </location>
</feature>
<feature type="mutagenesis site" description="Complete loss of lrgAB promoter binding." evidence="6">
    <original>D</original>
    <variation>A</variation>
    <location>
        <position position="53"/>
    </location>
</feature>
<feature type="strand" evidence="8">
    <location>
        <begin position="2"/>
        <end position="6"/>
    </location>
</feature>
<feature type="helix" evidence="8">
    <location>
        <begin position="10"/>
        <end position="23"/>
    </location>
</feature>
<feature type="strand" evidence="8">
    <location>
        <begin position="27"/>
        <end position="34"/>
    </location>
</feature>
<feature type="helix" evidence="8">
    <location>
        <begin position="35"/>
        <end position="44"/>
    </location>
</feature>
<feature type="strand" evidence="8">
    <location>
        <begin position="48"/>
        <end position="52"/>
    </location>
</feature>
<feature type="strand" evidence="8">
    <location>
        <begin position="54"/>
        <end position="56"/>
    </location>
</feature>
<feature type="helix" evidence="8">
    <location>
        <begin position="61"/>
        <end position="68"/>
    </location>
</feature>
<feature type="strand" evidence="8">
    <location>
        <begin position="71"/>
        <end position="73"/>
    </location>
</feature>
<feature type="strand" evidence="8">
    <location>
        <begin position="76"/>
        <end position="82"/>
    </location>
</feature>
<feature type="helix" evidence="8">
    <location>
        <begin position="87"/>
        <end position="92"/>
    </location>
</feature>
<feature type="strand" evidence="8">
    <location>
        <begin position="96"/>
        <end position="102"/>
    </location>
</feature>
<feature type="helix" evidence="8">
    <location>
        <begin position="105"/>
        <end position="115"/>
    </location>
</feature>
<keyword id="KW-0002">3D-structure</keyword>
<keyword id="KW-0963">Cytoplasm</keyword>
<keyword id="KW-0238">DNA-binding</keyword>
<keyword id="KW-0597">Phosphoprotein</keyword>
<keyword id="KW-1185">Reference proteome</keyword>
<keyword id="KW-0804">Transcription</keyword>
<keyword id="KW-0805">Transcription regulation</keyword>
<keyword id="KW-0902">Two-component regulatory system</keyword>
<proteinExistence type="evidence at protein level"/>
<reference key="1">
    <citation type="journal article" date="1996" name="J. Bacteriol.">
        <title>Identification and molecular characterization of a putative regulatory locus that affects autolysis in Staphylococcus aureus.</title>
        <authorList>
            <person name="Brunskill E.W."/>
            <person name="Bayles K.W."/>
        </authorList>
    </citation>
    <scope>NUCLEOTIDE SEQUENCE [GENOMIC DNA]</scope>
</reference>
<reference key="2">
    <citation type="book" date="2006" name="Gram positive pathogens, 2nd edition">
        <title>The Staphylococcus aureus NCTC 8325 genome.</title>
        <editorList>
            <person name="Fischetti V."/>
            <person name="Novick R."/>
            <person name="Ferretti J."/>
            <person name="Portnoy D."/>
            <person name="Rood J."/>
        </editorList>
        <authorList>
            <person name="Gillaspy A.F."/>
            <person name="Worrell V."/>
            <person name="Orvis J."/>
            <person name="Roe B.A."/>
            <person name="Dyer D.W."/>
            <person name="Iandolo J.J."/>
        </authorList>
    </citation>
    <scope>NUCLEOTIDE SEQUENCE [LARGE SCALE GENOMIC DNA]</scope>
    <source>
        <strain>NCTC 8325 / PS 47</strain>
    </source>
</reference>
<reference key="3">
    <citation type="journal article" date="1996" name="J. Bacteriol.">
        <title>Identification of LytSR-regulated genes from Staphylococcus aureus.</title>
        <authorList>
            <person name="Brunskill E.W."/>
            <person name="Bayles K.W."/>
        </authorList>
    </citation>
    <scope>FUNCTION IN REGULATION OF LRGA AND LRGB</scope>
</reference>
<reference key="4">
    <citation type="journal article" date="2009" name="J. Bacteriol.">
        <title>The Staphylococcus aureus LytSR two-component regulatory system affects biofilm formation.</title>
        <authorList>
            <person name="Sharma-Kuinkel B.K."/>
            <person name="Mann E.E."/>
            <person name="Ahn J.S."/>
            <person name="Kuechenmeister L.J."/>
            <person name="Dunman P.M."/>
            <person name="Bayles K.W."/>
        </authorList>
    </citation>
    <scope>FUNCTION</scope>
    <source>
        <strain>UAMS-1</strain>
    </source>
</reference>
<reference key="5">
    <citation type="journal article" date="2013" name="Antimicrob. Agents Chemother.">
        <title>Role of the LytSR two-component regulatory system in adaptation to cationic antimicrobial peptides in Staphylococcus aureus.</title>
        <authorList>
            <person name="Yang S.J."/>
            <person name="Xiong Y.Q."/>
            <person name="Yeaman M.R."/>
            <person name="Bayles K.W."/>
            <person name="Abdelhady W."/>
            <person name="Bayer A.S."/>
        </authorList>
    </citation>
    <scope>FUNCTION</scope>
    <scope>DISRUPTION PHENOTYPE</scope>
    <source>
        <strain>UAMS-1</strain>
    </source>
</reference>
<reference key="6">
    <citation type="journal article" date="2015" name="Mol. Microbiol.">
        <title>Identification of the amino acids essential for LytSR-mediated signal transduction in Staphylococcus aureus and their roles in biofilm-specific gene expression.</title>
        <authorList>
            <person name="Lehman M.K."/>
            <person name="Bose J.L."/>
            <person name="Sharma-Kuinkel B.K."/>
            <person name="Moormeier D.E."/>
            <person name="Endres J.L."/>
            <person name="Sadykov M.R."/>
            <person name="Biswas I."/>
            <person name="Bayles K.W."/>
        </authorList>
    </citation>
    <scope>FUNCTION</scope>
    <scope>MUTAGENESIS OF ASP-53</scope>
    <scope>PHOSPHORYLATION</scope>
    <source>
        <strain>UAMS-1</strain>
    </source>
</reference>
<gene>
    <name type="primary">lytR</name>
    <name type="ordered locus">SAOUHSC_00231</name>
</gene>
<name>LYTR_STAA8</name>
<protein>
    <recommendedName>
        <fullName>Transcriptional regulatory protein LytR</fullName>
    </recommendedName>
</protein>
<accession>P60611</accession>
<accession>P96456</accession>
<accession>Q2G1B4</accession>